<feature type="chain" id="PRO_0000189911" description="Phosphate acyltransferase">
    <location>
        <begin position="1"/>
        <end position="351"/>
    </location>
</feature>
<accession>Q9JW54</accession>
<accession>A1IPZ3</accession>
<gene>
    <name evidence="1" type="primary">plsX</name>
    <name type="ordered locus">NMA0542</name>
</gene>
<name>PLSX_NEIMA</name>
<reference key="1">
    <citation type="journal article" date="2000" name="Nature">
        <title>Complete DNA sequence of a serogroup A strain of Neisseria meningitidis Z2491.</title>
        <authorList>
            <person name="Parkhill J."/>
            <person name="Achtman M."/>
            <person name="James K.D."/>
            <person name="Bentley S.D."/>
            <person name="Churcher C.M."/>
            <person name="Klee S.R."/>
            <person name="Morelli G."/>
            <person name="Basham D."/>
            <person name="Brown D."/>
            <person name="Chillingworth T."/>
            <person name="Davies R.M."/>
            <person name="Davis P."/>
            <person name="Devlin K."/>
            <person name="Feltwell T."/>
            <person name="Hamlin N."/>
            <person name="Holroyd S."/>
            <person name="Jagels K."/>
            <person name="Leather S."/>
            <person name="Moule S."/>
            <person name="Mungall K.L."/>
            <person name="Quail M.A."/>
            <person name="Rajandream M.A."/>
            <person name="Rutherford K.M."/>
            <person name="Simmonds M."/>
            <person name="Skelton J."/>
            <person name="Whitehead S."/>
            <person name="Spratt B.G."/>
            <person name="Barrell B.G."/>
        </authorList>
    </citation>
    <scope>NUCLEOTIDE SEQUENCE [LARGE SCALE GENOMIC DNA]</scope>
    <source>
        <strain>DSM 15465 / Z2491</strain>
    </source>
</reference>
<organism>
    <name type="scientific">Neisseria meningitidis serogroup A / serotype 4A (strain DSM 15465 / Z2491)</name>
    <dbReference type="NCBI Taxonomy" id="122587"/>
    <lineage>
        <taxon>Bacteria</taxon>
        <taxon>Pseudomonadati</taxon>
        <taxon>Pseudomonadota</taxon>
        <taxon>Betaproteobacteria</taxon>
        <taxon>Neisseriales</taxon>
        <taxon>Neisseriaceae</taxon>
        <taxon>Neisseria</taxon>
    </lineage>
</organism>
<keyword id="KW-0963">Cytoplasm</keyword>
<keyword id="KW-0444">Lipid biosynthesis</keyword>
<keyword id="KW-0443">Lipid metabolism</keyword>
<keyword id="KW-0594">Phospholipid biosynthesis</keyword>
<keyword id="KW-1208">Phospholipid metabolism</keyword>
<keyword id="KW-0808">Transferase</keyword>
<proteinExistence type="inferred from homology"/>
<dbReference type="EC" id="2.3.1.274" evidence="1"/>
<dbReference type="EMBL" id="AL157959">
    <property type="protein sequence ID" value="CAM07818.1"/>
    <property type="molecule type" value="Genomic_DNA"/>
</dbReference>
<dbReference type="PIR" id="F81972">
    <property type="entry name" value="F81972"/>
</dbReference>
<dbReference type="RefSeq" id="WP_002246448.1">
    <property type="nucleotide sequence ID" value="NC_003116.1"/>
</dbReference>
<dbReference type="SMR" id="Q9JW54"/>
<dbReference type="EnsemblBacteria" id="CAM07818">
    <property type="protein sequence ID" value="CAM07818"/>
    <property type="gene ID" value="NMA0542"/>
</dbReference>
<dbReference type="KEGG" id="nma:NMA0542"/>
<dbReference type="HOGENOM" id="CLU_039379_1_0_4"/>
<dbReference type="UniPathway" id="UPA00085"/>
<dbReference type="Proteomes" id="UP000000626">
    <property type="component" value="Chromosome"/>
</dbReference>
<dbReference type="GO" id="GO:0005737">
    <property type="term" value="C:cytoplasm"/>
    <property type="evidence" value="ECO:0007669"/>
    <property type="project" value="UniProtKB-SubCell"/>
</dbReference>
<dbReference type="GO" id="GO:0043811">
    <property type="term" value="F:phosphate:acyl-[acyl carrier protein] acyltransferase activity"/>
    <property type="evidence" value="ECO:0007669"/>
    <property type="project" value="UniProtKB-UniRule"/>
</dbReference>
<dbReference type="GO" id="GO:0006633">
    <property type="term" value="P:fatty acid biosynthetic process"/>
    <property type="evidence" value="ECO:0007669"/>
    <property type="project" value="UniProtKB-UniRule"/>
</dbReference>
<dbReference type="GO" id="GO:0008654">
    <property type="term" value="P:phospholipid biosynthetic process"/>
    <property type="evidence" value="ECO:0007669"/>
    <property type="project" value="UniProtKB-KW"/>
</dbReference>
<dbReference type="Gene3D" id="3.40.718.10">
    <property type="entry name" value="Isopropylmalate Dehydrogenase"/>
    <property type="match status" value="1"/>
</dbReference>
<dbReference type="HAMAP" id="MF_00019">
    <property type="entry name" value="PlsX"/>
    <property type="match status" value="1"/>
</dbReference>
<dbReference type="InterPro" id="IPR003664">
    <property type="entry name" value="FA_synthesis"/>
</dbReference>
<dbReference type="InterPro" id="IPR012281">
    <property type="entry name" value="Phospholipid_synth_PlsX-like"/>
</dbReference>
<dbReference type="NCBIfam" id="TIGR00182">
    <property type="entry name" value="plsX"/>
    <property type="match status" value="1"/>
</dbReference>
<dbReference type="PANTHER" id="PTHR30100">
    <property type="entry name" value="FATTY ACID/PHOSPHOLIPID SYNTHESIS PROTEIN PLSX"/>
    <property type="match status" value="1"/>
</dbReference>
<dbReference type="PANTHER" id="PTHR30100:SF1">
    <property type="entry name" value="PHOSPHATE ACYLTRANSFERASE"/>
    <property type="match status" value="1"/>
</dbReference>
<dbReference type="Pfam" id="PF02504">
    <property type="entry name" value="FA_synthesis"/>
    <property type="match status" value="1"/>
</dbReference>
<dbReference type="PIRSF" id="PIRSF002465">
    <property type="entry name" value="Phsphlp_syn_PlsX"/>
    <property type="match status" value="1"/>
</dbReference>
<dbReference type="SUPFAM" id="SSF53659">
    <property type="entry name" value="Isocitrate/Isopropylmalate dehydrogenase-like"/>
    <property type="match status" value="1"/>
</dbReference>
<comment type="function">
    <text evidence="1">Catalyzes the reversible formation of acyl-phosphate (acyl-PO(4)) from acyl-[acyl-carrier-protein] (acyl-ACP). This enzyme utilizes acyl-ACP as fatty acyl donor, but not acyl-CoA.</text>
</comment>
<comment type="catalytic activity">
    <reaction evidence="1">
        <text>a fatty acyl-[ACP] + phosphate = an acyl phosphate + holo-[ACP]</text>
        <dbReference type="Rhea" id="RHEA:42292"/>
        <dbReference type="Rhea" id="RHEA-COMP:9685"/>
        <dbReference type="Rhea" id="RHEA-COMP:14125"/>
        <dbReference type="ChEBI" id="CHEBI:43474"/>
        <dbReference type="ChEBI" id="CHEBI:59918"/>
        <dbReference type="ChEBI" id="CHEBI:64479"/>
        <dbReference type="ChEBI" id="CHEBI:138651"/>
        <dbReference type="EC" id="2.3.1.274"/>
    </reaction>
</comment>
<comment type="pathway">
    <text evidence="1">Lipid metabolism; phospholipid metabolism.</text>
</comment>
<comment type="subunit">
    <text evidence="1">Homodimer. Probably interacts with PlsY.</text>
</comment>
<comment type="subcellular location">
    <subcellularLocation>
        <location evidence="1">Cytoplasm</location>
    </subcellularLocation>
    <text evidence="1">Associated with the membrane possibly through PlsY.</text>
</comment>
<comment type="similarity">
    <text evidence="1">Belongs to the PlsX family.</text>
</comment>
<evidence type="ECO:0000255" key="1">
    <source>
        <dbReference type="HAMAP-Rule" id="MF_00019"/>
    </source>
</evidence>
<protein>
    <recommendedName>
        <fullName evidence="1">Phosphate acyltransferase</fullName>
        <ecNumber evidence="1">2.3.1.274</ecNumber>
    </recommendedName>
    <alternativeName>
        <fullName evidence="1">Acyl-ACP phosphotransacylase</fullName>
    </alternativeName>
    <alternativeName>
        <fullName evidence="1">Acyl-[acyl-carrier-protein]--phosphate acyltransferase</fullName>
    </alternativeName>
    <alternativeName>
        <fullName evidence="1">Phosphate-acyl-ACP acyltransferase</fullName>
    </alternativeName>
</protein>
<sequence length="351" mass="37028">MITLAVDAMGGDQGLAVTVPGATAFLQAHPDVHLIMTGDETQLRQALTAAGAPMERIDICHTAQIVGMDEAPQSALKNKKDSSMRVAVNQVKEGKAQAAVSAGNTGALMATARFVLKTIPGIERPAIAKFLPSDTDHVTLALDLGANVDCTPEQLAQFAVIGSELVHALHPQKGQPRVGLVNVGTEDIKGTDTVKQTYKLLQNSKLNFIGNIESNSILYGEADVVVADGFVGNVMLKTIEGAVKFMSGAIRREFQSNLFNKLAAVAALPALKGLKNKLDPRKFNGAILLGLRGIVIKSHGGTDETGFRYALEEAYHEAKSASLSKIEQGVAEQLAALETAKAVQNENVGGL</sequence>